<feature type="chain" id="PRO_0000461073" description="Endolysin LysK">
    <location>
        <begin position="1"/>
        <end position="495"/>
    </location>
</feature>
<feature type="domain" description="Peptidase C51" evidence="4">
    <location>
        <begin position="29"/>
        <end position="160"/>
    </location>
</feature>
<feature type="domain" description="N-acetylmuramoyl-L-alanine amidase" evidence="3">
    <location>
        <begin position="205"/>
        <end position="334"/>
    </location>
</feature>
<feature type="domain" description="SH3b" evidence="5">
    <location>
        <begin position="412"/>
        <end position="481"/>
    </location>
</feature>
<feature type="region of interest" description="Disordered" evidence="6">
    <location>
        <begin position="378"/>
        <end position="398"/>
    </location>
</feature>
<feature type="compositionally biased region" description="Polar residues" evidence="6">
    <location>
        <begin position="378"/>
        <end position="393"/>
    </location>
</feature>
<feature type="active site" description="For endopeptidase activity" evidence="8">
    <location>
        <position position="54"/>
    </location>
</feature>
<feature type="active site" description="For endopeptidase activity" evidence="8">
    <location>
        <position position="117"/>
    </location>
</feature>
<feature type="active site" description="For endopeptidase activity" evidence="11">
    <location>
        <position position="134"/>
    </location>
</feature>
<feature type="binding site" evidence="8 13 14">
    <location>
        <position position="45"/>
    </location>
    <ligand>
        <name>Ca(2+)</name>
        <dbReference type="ChEBI" id="CHEBI:29108"/>
    </ligand>
</feature>
<feature type="binding site" evidence="8 13 14">
    <location>
        <position position="47"/>
    </location>
    <ligand>
        <name>Ca(2+)</name>
        <dbReference type="ChEBI" id="CHEBI:29108"/>
    </ligand>
</feature>
<feature type="binding site" evidence="8 13 14">
    <location>
        <position position="49"/>
    </location>
    <ligand>
        <name>Ca(2+)</name>
        <dbReference type="ChEBI" id="CHEBI:29108"/>
    </ligand>
</feature>
<feature type="binding site" evidence="8 13 14">
    <location>
        <position position="51"/>
    </location>
    <ligand>
        <name>Ca(2+)</name>
        <dbReference type="ChEBI" id="CHEBI:29108"/>
    </ligand>
</feature>
<feature type="binding site" evidence="8 13 14">
    <location>
        <position position="56"/>
    </location>
    <ligand>
        <name>Ca(2+)</name>
        <dbReference type="ChEBI" id="CHEBI:29108"/>
    </ligand>
</feature>
<feature type="binding site" evidence="1">
    <location>
        <position position="214"/>
    </location>
    <ligand>
        <name>Zn(2+)</name>
        <dbReference type="ChEBI" id="CHEBI:29105"/>
    </ligand>
</feature>
<feature type="binding site" evidence="1">
    <location>
        <position position="324"/>
    </location>
    <ligand>
        <name>Zn(2+)</name>
        <dbReference type="ChEBI" id="CHEBI:29105"/>
    </ligand>
</feature>
<feature type="binding site" evidence="1">
    <location>
        <position position="332"/>
    </location>
    <ligand>
        <name>Zn(2+)</name>
        <dbReference type="ChEBI" id="CHEBI:29105"/>
    </ligand>
</feature>
<feature type="mutagenesis site" description="No effect on staphylolytic ability." evidence="8">
    <original>Y</original>
    <variation>A</variation>
    <location>
        <position position="49"/>
    </location>
</feature>
<feature type="mutagenesis site" description="Reduced staphylolytic ability." evidence="8">
    <original>H</original>
    <variation>A</variation>
    <location>
        <position position="51"/>
    </location>
</feature>
<feature type="mutagenesis site" description="Complete loss of staphylolytic ability." evidence="8">
    <original>C</original>
    <variation>A</variation>
    <location>
        <position position="54"/>
    </location>
</feature>
<feature type="mutagenesis site" description="Complete loss of staphylolytic ability." evidence="8">
    <original>H</original>
    <variation>A</variation>
    <location>
        <position position="117"/>
    </location>
</feature>
<feature type="mutagenesis site" description="Strongly reduced staphylolytic ability." evidence="8">
    <original>E</original>
    <variation>A</variation>
    <location>
        <position position="134"/>
    </location>
</feature>
<feature type="helix" evidence="15">
    <location>
        <begin position="5"/>
        <end position="17"/>
    </location>
</feature>
<feature type="strand" evidence="15">
    <location>
        <begin position="46"/>
        <end position="52"/>
    </location>
</feature>
<feature type="helix" evidence="15">
    <location>
        <begin position="54"/>
        <end position="65"/>
    </location>
</feature>
<feature type="turn" evidence="15">
    <location>
        <begin position="66"/>
        <end position="68"/>
    </location>
</feature>
<feature type="helix" evidence="15">
    <location>
        <begin position="76"/>
        <end position="81"/>
    </location>
</feature>
<feature type="strand" evidence="15">
    <location>
        <begin position="89"/>
        <end position="92"/>
    </location>
</feature>
<feature type="strand" evidence="15">
    <location>
        <begin position="104"/>
        <end position="107"/>
    </location>
</feature>
<feature type="helix" evidence="15">
    <location>
        <begin position="110"/>
        <end position="112"/>
    </location>
</feature>
<feature type="turn" evidence="15">
    <location>
        <begin position="113"/>
        <end position="115"/>
    </location>
</feature>
<feature type="strand" evidence="15">
    <location>
        <begin position="117"/>
        <end position="123"/>
    </location>
</feature>
<feature type="strand" evidence="15">
    <location>
        <begin position="130"/>
        <end position="135"/>
    </location>
</feature>
<feature type="strand" evidence="15">
    <location>
        <begin position="139"/>
        <end position="141"/>
    </location>
</feature>
<feature type="strand" evidence="15">
    <location>
        <begin position="146"/>
        <end position="150"/>
    </location>
</feature>
<feature type="strand" evidence="15">
    <location>
        <begin position="155"/>
        <end position="160"/>
    </location>
</feature>
<protein>
    <recommendedName>
        <fullName>Endolysin LysK</fullName>
    </recommendedName>
    <alternativeName>
        <fullName evidence="9">D-alanyl-glycyl endopeptidase</fullName>
        <ecNumber evidence="7">3.4.22.-</ecNumber>
    </alternativeName>
    <alternativeName>
        <fullName evidence="9">N-acetylmuramoyl-L-alanine amidase</fullName>
        <ecNumber evidence="7">3.5.1.28</ecNumber>
    </alternativeName>
</protein>
<keyword id="KW-0002">3D-structure</keyword>
<keyword id="KW-0929">Antimicrobial</keyword>
<keyword id="KW-0081">Bacteriolytic enzyme</keyword>
<keyword id="KW-0106">Calcium</keyword>
<keyword id="KW-0204">Cytolysis</keyword>
<keyword id="KW-0578">Host cell lysis by virus</keyword>
<keyword id="KW-0378">Hydrolase</keyword>
<keyword id="KW-0479">Metal-binding</keyword>
<keyword id="KW-0511">Multifunctional enzyme</keyword>
<keyword id="KW-0645">Protease</keyword>
<keyword id="KW-1188">Viral release from host cell</keyword>
<keyword id="KW-0862">Zinc</keyword>
<name>ENLYS_BPPGK</name>
<evidence type="ECO:0000250" key="1">
    <source>
        <dbReference type="UniProtKB" id="D6QY02"/>
    </source>
</evidence>
<evidence type="ECO:0000250" key="2">
    <source>
        <dbReference type="UniProtKB" id="P00806"/>
    </source>
</evidence>
<evidence type="ECO:0000255" key="3"/>
<evidence type="ECO:0000255" key="4">
    <source>
        <dbReference type="PROSITE-ProRule" id="PRU00048"/>
    </source>
</evidence>
<evidence type="ECO:0000255" key="5">
    <source>
        <dbReference type="PROSITE-ProRule" id="PRU01117"/>
    </source>
</evidence>
<evidence type="ECO:0000256" key="6">
    <source>
        <dbReference type="SAM" id="MobiDB-lite"/>
    </source>
</evidence>
<evidence type="ECO:0000269" key="7">
    <source>
    </source>
</evidence>
<evidence type="ECO:0000269" key="8">
    <source>
    </source>
</evidence>
<evidence type="ECO:0000303" key="9">
    <source>
    </source>
</evidence>
<evidence type="ECO:0000305" key="10"/>
<evidence type="ECO:0000305" key="11">
    <source>
    </source>
</evidence>
<evidence type="ECO:0000312" key="12">
    <source>
        <dbReference type="EMBL" id="AHB79986.1"/>
    </source>
</evidence>
<evidence type="ECO:0007744" key="13">
    <source>
        <dbReference type="PDB" id="4CSH"/>
    </source>
</evidence>
<evidence type="ECO:0007744" key="14">
    <source>
        <dbReference type="PDB" id="4CT3"/>
    </source>
</evidence>
<evidence type="ECO:0007829" key="15">
    <source>
        <dbReference type="PDB" id="4CT3"/>
    </source>
</evidence>
<comment type="function">
    <text evidence="7 8 10">Endolysin that degrades host peptidoglycans and participates in the sequential events which lead to the programmed host cell lysis releasing the mature viral particles (Probable). Exhibits lytic activity against Staphylococcus aureus (PubMed:19493008, PubMed:25064136). The CHAP activity cleaves the peptidic bond between the D-alanine of the tetra-peptide stem and the first glycine of the penta-glycine cross-bridge (PubMed:19493008, PubMed:25064136). The N-acetyl-muramidase activity cleaves between N-acetylmuramic acid and N-acetylglucosamine bonds (PubMed:19493008).</text>
</comment>
<comment type="catalytic activity">
    <reaction evidence="7">
        <text>Hydrolyzes the link between N-acetylmuramoyl residues and L-amino acid residues in certain cell-wall glycopeptides.</text>
        <dbReference type="EC" id="3.5.1.28"/>
    </reaction>
</comment>
<comment type="cofactor">
    <cofactor evidence="2">
        <name>Zn(2+)</name>
        <dbReference type="ChEBI" id="CHEBI:29105"/>
    </cofactor>
    <text evidence="2">Zn(2+) is required for amidase activity.</text>
</comment>
<comment type="domain">
    <text evidence="7 8">Contains a cysteine-histidine dependent amido-hydrolase/peptidase domain (peptidase C51/CHAP domain) at the N-terminus, a central amidase domain and a SH3b cell wall-binding domain at the C-terminus (PubMed:19493008, PubMed:25064136). The CHAP domain contains a tightly bound structural Ca(2+) ion and it is present at the N-terminus and is associated with the endopeptidase activity (PubMed:25064136). The SH3b domain increases the CHAP domain activity (PubMed:19493008).</text>
</comment>
<comment type="similarity">
    <text evidence="10">Belongs to the N-acetylmuramoyl-L-alanine amidase 2 family.</text>
</comment>
<gene>
    <name type="ORF">ORF30/ORF32</name>
    <name evidence="12" type="ORF">PhageK_071</name>
</gene>
<sequence>MAKTQAEINKRLDAYAKGTVDSPYRVKKATSYDPSFGVMEAGAIDADGYYHAQCQDLITDYVLWLTDNKVRTWGNAKDQIKQSYGTGFKIHENKPSTVPKKGWIAVFTSGSYEQWGHIGIVYDGGNTSTFTILEQNWNGYANKKPTKRVDNYYGLTHFIEIPVKAGTTVKKETAKKSASKTPAPKKKATLKVSKNHINYTMDKRGKKPEGMVIHNDAGRSSGQQYENSLANAGYARYANGIAHYYGSEGYVWEAIDAKNQIAWHTGDGTGANSGNFRFAGIEVCQSMSASDAQFLKNEQAVFQFTAEKFKEWGLTPNRKTVRLHMEFVPTACPHRSMVLHTGFNPVTQGRPSQAIMNKLKDYFIKQIKNYMDKGTSSSTVVKDGKTSSASTPATRPVTGSWKKNQYGTWYKPENATFVNGNQPIVTRIGSPFLNAPVGGNLPAGATIVYDEVCIQAGHIWIGYNAYNGNRVYCPVRTCQGVPPNQIPGVAWGVFK</sequence>
<proteinExistence type="evidence at protein level"/>
<reference key="1">
    <citation type="journal article" date="2004" name="J. Bacteriol.">
        <title>Genome of staphylococcal phage K: a new lineage of Myoviridae infecting gram-positive bacteria with a low G+C content.</title>
        <authorList>
            <person name="O'Flaherty S."/>
            <person name="Coffey A."/>
            <person name="Edwards R."/>
            <person name="Meaney W."/>
            <person name="Fitzgerald G.F."/>
            <person name="Ross R.P."/>
        </authorList>
    </citation>
    <scope>NUCLEOTIDE SEQUENCE [GENOMIC DNA]</scope>
</reference>
<reference key="2">
    <citation type="journal article" date="2009" name="Appl. Environ. Microbiol.">
        <title>Phage lysin LysK can be truncated to its CHAP domain and retain lytic activity against live antibiotic-resistant staphylococci.</title>
        <authorList>
            <person name="Horgan M."/>
            <person name="O'Flynn G."/>
            <person name="Garry J."/>
            <person name="Cooney J."/>
            <person name="Coffey A."/>
            <person name="Fitzgerald G.F."/>
            <person name="Ross R.P."/>
            <person name="McAuliffe O."/>
        </authorList>
    </citation>
    <scope>DOMAIN</scope>
</reference>
<reference key="3">
    <citation type="journal article" date="2014" name="Genome Announc.">
        <title>Revised Genome Sequence of Staphylococcus aureus Bacteriophage K.</title>
        <authorList>
            <person name="Gill J.J."/>
        </authorList>
    </citation>
    <scope>NUCLEOTIDE SEQUENCE [GENOMIC DNA]</scope>
</reference>
<reference key="4">
    <citation type="journal article" date="2009" name="FEMS Microbiol. Lett.">
        <title>LysK CHAP endopeptidase domain is required for lysis of live staphylococcal cells.</title>
        <authorList>
            <person name="Becker S.C."/>
            <person name="Dong S."/>
            <person name="Baker J.R."/>
            <person name="Foster-Frey J."/>
            <person name="Pritchard D.G."/>
            <person name="Donovan D.M."/>
        </authorList>
    </citation>
    <scope>FUNCTION</scope>
    <scope>DOMAIN</scope>
    <scope>CATALYTIC ACTIVITY</scope>
</reference>
<reference evidence="13 14" key="5">
    <citation type="journal article" date="2014" name="Virol. J.">
        <title>Crystal structure of the lytic CHAP(K) domain of the endolysin LysK from Staphylococcus aureus bacteriophage K.</title>
        <authorList>
            <person name="Sanz-Gaitero M."/>
            <person name="Keary R."/>
            <person name="Garcia-Doval C."/>
            <person name="Coffey A."/>
            <person name="van Raaij M.J."/>
        </authorList>
    </citation>
    <scope>X-RAY CRYSTALLOGRAPHY (1.69 ANGSTROMS) OF 1-165 IN COMPLEX WITH CALCIUM AND ZINC</scope>
    <scope>DOMAIN</scope>
    <scope>COFACTOR</scope>
    <scope>MUTAGENESIS OF TYR-49; HIS-51; CYS-54; HIS-117 AND GLU-134</scope>
    <scope>ACTIVE SITE</scope>
</reference>
<dbReference type="EC" id="3.4.22.-" evidence="7"/>
<dbReference type="EC" id="3.5.1.28" evidence="7"/>
<dbReference type="EMBL" id="AY176327">
    <property type="protein sequence ID" value="AAO47477.2"/>
    <property type="molecule type" value="Genomic_DNA"/>
</dbReference>
<dbReference type="EMBL" id="KF766114">
    <property type="protein sequence ID" value="AHB79986.1"/>
    <property type="molecule type" value="Genomic_DNA"/>
</dbReference>
<dbReference type="RefSeq" id="YP_009041293.1">
    <property type="nucleotide sequence ID" value="NC_005880.2"/>
</dbReference>
<dbReference type="PDB" id="4CSH">
    <property type="method" value="X-ray"/>
    <property type="resolution" value="1.79 A"/>
    <property type="chains" value="A/B/C/D=1-165"/>
</dbReference>
<dbReference type="PDB" id="4CT3">
    <property type="method" value="X-ray"/>
    <property type="resolution" value="1.69 A"/>
    <property type="chains" value="A/B/C/D=1-165"/>
</dbReference>
<dbReference type="PDB" id="5O1Q">
    <property type="method" value="NMR"/>
    <property type="chains" value="A=391-495"/>
</dbReference>
<dbReference type="PDBsum" id="4CSH"/>
<dbReference type="PDBsum" id="4CT3"/>
<dbReference type="PDBsum" id="5O1Q"/>
<dbReference type="SMR" id="Q6Y7T6"/>
<dbReference type="KEGG" id="vg:19622106"/>
<dbReference type="OrthoDB" id="15584at10239"/>
<dbReference type="Proteomes" id="UP000001246">
    <property type="component" value="Segment"/>
</dbReference>
<dbReference type="Proteomes" id="UP000211020">
    <property type="component" value="Segment"/>
</dbReference>
<dbReference type="GO" id="GO:0046872">
    <property type="term" value="F:metal ion binding"/>
    <property type="evidence" value="ECO:0007669"/>
    <property type="project" value="UniProtKB-KW"/>
</dbReference>
<dbReference type="GO" id="GO:0008745">
    <property type="term" value="F:N-acetylmuramoyl-L-alanine amidase activity"/>
    <property type="evidence" value="ECO:0000314"/>
    <property type="project" value="CACAO"/>
</dbReference>
<dbReference type="GO" id="GO:0008233">
    <property type="term" value="F:peptidase activity"/>
    <property type="evidence" value="ECO:0000315"/>
    <property type="project" value="CACAO"/>
</dbReference>
<dbReference type="GO" id="GO:0042742">
    <property type="term" value="P:defense response to bacterium"/>
    <property type="evidence" value="ECO:0007669"/>
    <property type="project" value="UniProtKB-KW"/>
</dbReference>
<dbReference type="GO" id="GO:0009253">
    <property type="term" value="P:peptidoglycan catabolic process"/>
    <property type="evidence" value="ECO:0007669"/>
    <property type="project" value="InterPro"/>
</dbReference>
<dbReference type="GO" id="GO:0006508">
    <property type="term" value="P:proteolysis"/>
    <property type="evidence" value="ECO:0007669"/>
    <property type="project" value="UniProtKB-KW"/>
</dbReference>
<dbReference type="GO" id="GO:0001897">
    <property type="term" value="P:symbiont-mediated cytolysis of host cell"/>
    <property type="evidence" value="ECO:0000314"/>
    <property type="project" value="CACAO"/>
</dbReference>
<dbReference type="CDD" id="cd06583">
    <property type="entry name" value="PGRP"/>
    <property type="match status" value="1"/>
</dbReference>
<dbReference type="FunFam" id="2.30.30.40:FF:000236">
    <property type="entry name" value="N-acetylmuramoyl-L-alanine amidase"/>
    <property type="match status" value="1"/>
</dbReference>
<dbReference type="FunFam" id="3.40.80.10:FF:000005">
    <property type="entry name" value="N-acetylmuramoyl-L-alanine amidase"/>
    <property type="match status" value="1"/>
</dbReference>
<dbReference type="FunFam" id="3.90.1720.10:FF:000008">
    <property type="entry name" value="N-acetylmuramoyl-L-alanine amidase"/>
    <property type="match status" value="1"/>
</dbReference>
<dbReference type="Gene3D" id="3.90.1720.10">
    <property type="entry name" value="endopeptidase domain like (from Nostoc punctiforme)"/>
    <property type="match status" value="1"/>
</dbReference>
<dbReference type="Gene3D" id="3.40.80.10">
    <property type="entry name" value="Peptidoglycan recognition protein-like"/>
    <property type="match status" value="1"/>
</dbReference>
<dbReference type="Gene3D" id="2.30.30.40">
    <property type="entry name" value="SH3 Domains"/>
    <property type="match status" value="1"/>
</dbReference>
<dbReference type="InterPro" id="IPR036505">
    <property type="entry name" value="Amidase/PGRP_sf"/>
</dbReference>
<dbReference type="InterPro" id="IPR002502">
    <property type="entry name" value="Amidase_domain"/>
</dbReference>
<dbReference type="InterPro" id="IPR007921">
    <property type="entry name" value="CHAP_dom"/>
</dbReference>
<dbReference type="InterPro" id="IPR038765">
    <property type="entry name" value="Papain-like_cys_pep_sf"/>
</dbReference>
<dbReference type="InterPro" id="IPR003646">
    <property type="entry name" value="SH3-like_bac-type"/>
</dbReference>
<dbReference type="Pfam" id="PF01510">
    <property type="entry name" value="Amidase_2"/>
    <property type="match status" value="1"/>
</dbReference>
<dbReference type="Pfam" id="PF05257">
    <property type="entry name" value="CHAP"/>
    <property type="match status" value="1"/>
</dbReference>
<dbReference type="Pfam" id="PF08460">
    <property type="entry name" value="SH3_5"/>
    <property type="match status" value="1"/>
</dbReference>
<dbReference type="SMART" id="SM00644">
    <property type="entry name" value="Ami_2"/>
    <property type="match status" value="1"/>
</dbReference>
<dbReference type="SMART" id="SM00287">
    <property type="entry name" value="SH3b"/>
    <property type="match status" value="1"/>
</dbReference>
<dbReference type="SUPFAM" id="SSF54001">
    <property type="entry name" value="Cysteine proteinases"/>
    <property type="match status" value="1"/>
</dbReference>
<dbReference type="SUPFAM" id="SSF55846">
    <property type="entry name" value="N-acetylmuramoyl-L-alanine amidase-like"/>
    <property type="match status" value="1"/>
</dbReference>
<dbReference type="PROSITE" id="PS50911">
    <property type="entry name" value="CHAP"/>
    <property type="match status" value="1"/>
</dbReference>
<organismHost>
    <name type="scientific">Staphylococcus aureus</name>
    <dbReference type="NCBI Taxonomy" id="1280"/>
</organismHost>
<organism>
    <name type="scientific">Staphylococcus phage K</name>
    <dbReference type="NCBI Taxonomy" id="221915"/>
    <lineage>
        <taxon>Viruses</taxon>
        <taxon>Duplodnaviria</taxon>
        <taxon>Heunggongvirae</taxon>
        <taxon>Uroviricota</taxon>
        <taxon>Caudoviricetes</taxon>
        <taxon>Herelleviridae</taxon>
        <taxon>Twortvirinae</taxon>
        <taxon>Kayvirus</taxon>
    </lineage>
</organism>
<accession>Q6Y7T6</accession>